<feature type="chain" id="PRO_0000208861" description="Lysozyme C">
    <location>
        <begin position="1"/>
        <end position="129"/>
    </location>
</feature>
<feature type="domain" description="C-type lysozyme" evidence="1">
    <location>
        <begin position="1"/>
        <end position="129"/>
    </location>
</feature>
<feature type="active site" evidence="1">
    <location>
        <position position="35"/>
    </location>
</feature>
<feature type="active site" evidence="1">
    <location>
        <position position="52"/>
    </location>
</feature>
<feature type="disulfide bond" evidence="1">
    <location>
        <begin position="6"/>
        <end position="127"/>
    </location>
</feature>
<feature type="disulfide bond" evidence="1">
    <location>
        <begin position="30"/>
        <end position="115"/>
    </location>
</feature>
<feature type="disulfide bond" evidence="1">
    <location>
        <begin position="64"/>
        <end position="80"/>
    </location>
</feature>
<feature type="disulfide bond" evidence="1">
    <location>
        <begin position="76"/>
        <end position="94"/>
    </location>
</feature>
<keyword id="KW-0929">Antimicrobial</keyword>
<keyword id="KW-0081">Bacteriolytic enzyme</keyword>
<keyword id="KW-0903">Direct protein sequencing</keyword>
<keyword id="KW-1015">Disulfide bond</keyword>
<keyword id="KW-0326">Glycosidase</keyword>
<keyword id="KW-0378">Hydrolase</keyword>
<keyword id="KW-0964">Secreted</keyword>
<proteinExistence type="evidence at protein level"/>
<reference key="1">
    <citation type="journal article" date="1990" name="Agric. Biol. Chem.">
        <title>The amino acid sequence of Lady Amherst's pheasant (Chrysolophus amherstiae) and golden pheasant (Chrysolophus pictus) egg-white lysozymes.</title>
        <authorList>
            <person name="Araki T."/>
            <person name="Kuramoto M."/>
            <person name="Torikata T."/>
        </authorList>
    </citation>
    <scope>PROTEIN SEQUENCE</scope>
    <source>
        <tissue>Egg white</tissue>
    </source>
</reference>
<protein>
    <recommendedName>
        <fullName>Lysozyme C</fullName>
        <ecNumber>3.2.1.17</ecNumber>
    </recommendedName>
    <alternativeName>
        <fullName>1,4-beta-N-acetylmuramidase C</fullName>
    </alternativeName>
</protein>
<comment type="function">
    <text>Lysozymes have primarily a bacteriolytic function; those in tissues and body fluids are associated with the monocyte-macrophage system and enhance the activity of immunoagents.</text>
</comment>
<comment type="catalytic activity">
    <reaction>
        <text>Hydrolysis of (1-&gt;4)-beta-linkages between N-acetylmuramic acid and N-acetyl-D-glucosamine residues in a peptidoglycan and between N-acetyl-D-glucosamine residues in chitodextrins.</text>
        <dbReference type="EC" id="3.2.1.17"/>
    </reaction>
</comment>
<comment type="subunit">
    <text>Monomer.</text>
</comment>
<comment type="subcellular location">
    <subcellularLocation>
        <location>Secreted</location>
    </subcellularLocation>
</comment>
<comment type="miscellaneous">
    <text>Lysozyme C is capable of both hydrolysis and transglycosylation; it also shows a slight esterase activity. It acts rapidly on both peptide-substituted and unsubstituted peptidoglycan, and slowly on chitin oligosaccharides.</text>
</comment>
<comment type="similarity">
    <text evidence="1">Belongs to the glycosyl hydrolase 22 family.</text>
</comment>
<name>LYSC_CHRAM</name>
<evidence type="ECO:0000255" key="1">
    <source>
        <dbReference type="PROSITE-ProRule" id="PRU00680"/>
    </source>
</evidence>
<gene>
    <name type="primary">LYZ</name>
</gene>
<sequence length="129" mass="14311">KVYGRCELAAAMKRLGLDNYRGYSLGNWVCAAKFESNFNTHATNRNTDGSTDYGILQINSRWWCNDGRTPGSRNLCHIPCSALLSSDITASVNCAKKIVSDGNGMNAWVAWRNRCKGTDVNAWTRGCRL</sequence>
<accession>P22910</accession>
<dbReference type="EC" id="3.2.1.17"/>
<dbReference type="PIR" id="JH0211">
    <property type="entry name" value="JH0211"/>
</dbReference>
<dbReference type="SMR" id="P22910"/>
<dbReference type="CAZy" id="GH22">
    <property type="family name" value="Glycoside Hydrolase Family 22"/>
</dbReference>
<dbReference type="GO" id="GO:0005576">
    <property type="term" value="C:extracellular region"/>
    <property type="evidence" value="ECO:0007669"/>
    <property type="project" value="UniProtKB-SubCell"/>
</dbReference>
<dbReference type="GO" id="GO:0003796">
    <property type="term" value="F:lysozyme activity"/>
    <property type="evidence" value="ECO:0007669"/>
    <property type="project" value="UniProtKB-EC"/>
</dbReference>
<dbReference type="GO" id="GO:0050829">
    <property type="term" value="P:defense response to Gram-negative bacterium"/>
    <property type="evidence" value="ECO:0007669"/>
    <property type="project" value="TreeGrafter"/>
</dbReference>
<dbReference type="GO" id="GO:0050830">
    <property type="term" value="P:defense response to Gram-positive bacterium"/>
    <property type="evidence" value="ECO:0007669"/>
    <property type="project" value="TreeGrafter"/>
</dbReference>
<dbReference type="GO" id="GO:0031640">
    <property type="term" value="P:killing of cells of another organism"/>
    <property type="evidence" value="ECO:0007669"/>
    <property type="project" value="UniProtKB-KW"/>
</dbReference>
<dbReference type="CDD" id="cd16897">
    <property type="entry name" value="LYZ_C"/>
    <property type="match status" value="1"/>
</dbReference>
<dbReference type="FunFam" id="1.10.530.10:FF:000001">
    <property type="entry name" value="Lysozyme C"/>
    <property type="match status" value="1"/>
</dbReference>
<dbReference type="Gene3D" id="1.10.530.10">
    <property type="match status" value="1"/>
</dbReference>
<dbReference type="InterPro" id="IPR001916">
    <property type="entry name" value="Glyco_hydro_22"/>
</dbReference>
<dbReference type="InterPro" id="IPR019799">
    <property type="entry name" value="Glyco_hydro_22_CS"/>
</dbReference>
<dbReference type="InterPro" id="IPR000974">
    <property type="entry name" value="Glyco_hydro_22_lys"/>
</dbReference>
<dbReference type="InterPro" id="IPR023346">
    <property type="entry name" value="Lysozyme-like_dom_sf"/>
</dbReference>
<dbReference type="PANTHER" id="PTHR11407">
    <property type="entry name" value="LYSOZYME C"/>
    <property type="match status" value="1"/>
</dbReference>
<dbReference type="PANTHER" id="PTHR11407:SF28">
    <property type="entry name" value="LYSOZYME C"/>
    <property type="match status" value="1"/>
</dbReference>
<dbReference type="Pfam" id="PF00062">
    <property type="entry name" value="Lys"/>
    <property type="match status" value="1"/>
</dbReference>
<dbReference type="PRINTS" id="PR00137">
    <property type="entry name" value="LYSOZYME"/>
</dbReference>
<dbReference type="PRINTS" id="PR00135">
    <property type="entry name" value="LYZLACT"/>
</dbReference>
<dbReference type="SMART" id="SM00263">
    <property type="entry name" value="LYZ1"/>
    <property type="match status" value="1"/>
</dbReference>
<dbReference type="SUPFAM" id="SSF53955">
    <property type="entry name" value="Lysozyme-like"/>
    <property type="match status" value="1"/>
</dbReference>
<dbReference type="PROSITE" id="PS00128">
    <property type="entry name" value="GLYCOSYL_HYDROL_F22_1"/>
    <property type="match status" value="1"/>
</dbReference>
<dbReference type="PROSITE" id="PS51348">
    <property type="entry name" value="GLYCOSYL_HYDROL_F22_2"/>
    <property type="match status" value="1"/>
</dbReference>
<organism>
    <name type="scientific">Chrysolophus amherstiae</name>
    <name type="common">Lady Amherst's pheasant</name>
    <name type="synonym">Phasianus amherstiae</name>
    <dbReference type="NCBI Taxonomy" id="9088"/>
    <lineage>
        <taxon>Eukaryota</taxon>
        <taxon>Metazoa</taxon>
        <taxon>Chordata</taxon>
        <taxon>Craniata</taxon>
        <taxon>Vertebrata</taxon>
        <taxon>Euteleostomi</taxon>
        <taxon>Archelosauria</taxon>
        <taxon>Archosauria</taxon>
        <taxon>Dinosauria</taxon>
        <taxon>Saurischia</taxon>
        <taxon>Theropoda</taxon>
        <taxon>Coelurosauria</taxon>
        <taxon>Aves</taxon>
        <taxon>Neognathae</taxon>
        <taxon>Galloanserae</taxon>
        <taxon>Galliformes</taxon>
        <taxon>Phasianidae</taxon>
        <taxon>Phasianinae</taxon>
        <taxon>Chrysolophus</taxon>
    </lineage>
</organism>